<protein>
    <recommendedName>
        <fullName evidence="1">Large ribosomal subunit protein bL28</fullName>
    </recommendedName>
    <alternativeName>
        <fullName evidence="3">50S ribosomal protein L28</fullName>
    </alternativeName>
</protein>
<name>RL28_NEOSM</name>
<accession>Q2GE85</accession>
<feature type="chain" id="PRO_1000007283" description="Large ribosomal subunit protein bL28">
    <location>
        <begin position="1"/>
        <end position="102"/>
    </location>
</feature>
<feature type="region of interest" description="Disordered" evidence="2">
    <location>
        <begin position="1"/>
        <end position="27"/>
    </location>
</feature>
<feature type="compositionally biased region" description="Polar residues" evidence="2">
    <location>
        <begin position="1"/>
        <end position="20"/>
    </location>
</feature>
<evidence type="ECO:0000255" key="1">
    <source>
        <dbReference type="HAMAP-Rule" id="MF_00373"/>
    </source>
</evidence>
<evidence type="ECO:0000256" key="2">
    <source>
        <dbReference type="SAM" id="MobiDB-lite"/>
    </source>
</evidence>
<evidence type="ECO:0000305" key="3"/>
<keyword id="KW-0687">Ribonucleoprotein</keyword>
<keyword id="KW-0689">Ribosomal protein</keyword>
<comment type="similarity">
    <text evidence="1">Belongs to the bacterial ribosomal protein bL28 family.</text>
</comment>
<dbReference type="EMBL" id="CP000237">
    <property type="protein sequence ID" value="ABD46293.1"/>
    <property type="molecule type" value="Genomic_DNA"/>
</dbReference>
<dbReference type="RefSeq" id="WP_011451717.1">
    <property type="nucleotide sequence ID" value="NC_007798.1"/>
</dbReference>
<dbReference type="SMR" id="Q2GE85"/>
<dbReference type="STRING" id="222891.NSE_0321"/>
<dbReference type="KEGG" id="nse:NSE_0321"/>
<dbReference type="eggNOG" id="COG0227">
    <property type="taxonomic scope" value="Bacteria"/>
</dbReference>
<dbReference type="HOGENOM" id="CLU_064548_4_2_5"/>
<dbReference type="OrthoDB" id="9805609at2"/>
<dbReference type="Proteomes" id="UP000001942">
    <property type="component" value="Chromosome"/>
</dbReference>
<dbReference type="GO" id="GO:0022625">
    <property type="term" value="C:cytosolic large ribosomal subunit"/>
    <property type="evidence" value="ECO:0007669"/>
    <property type="project" value="TreeGrafter"/>
</dbReference>
<dbReference type="GO" id="GO:0003735">
    <property type="term" value="F:structural constituent of ribosome"/>
    <property type="evidence" value="ECO:0007669"/>
    <property type="project" value="InterPro"/>
</dbReference>
<dbReference type="GO" id="GO:0006412">
    <property type="term" value="P:translation"/>
    <property type="evidence" value="ECO:0007669"/>
    <property type="project" value="UniProtKB-UniRule"/>
</dbReference>
<dbReference type="Gene3D" id="2.30.170.40">
    <property type="entry name" value="Ribosomal protein L28/L24"/>
    <property type="match status" value="1"/>
</dbReference>
<dbReference type="HAMAP" id="MF_00373">
    <property type="entry name" value="Ribosomal_bL28"/>
    <property type="match status" value="1"/>
</dbReference>
<dbReference type="InterPro" id="IPR026569">
    <property type="entry name" value="Ribosomal_bL28"/>
</dbReference>
<dbReference type="InterPro" id="IPR034704">
    <property type="entry name" value="Ribosomal_bL28/bL31-like_sf"/>
</dbReference>
<dbReference type="InterPro" id="IPR001383">
    <property type="entry name" value="Ribosomal_bL28_bact-type"/>
</dbReference>
<dbReference type="InterPro" id="IPR037147">
    <property type="entry name" value="Ribosomal_bL28_sf"/>
</dbReference>
<dbReference type="NCBIfam" id="TIGR00009">
    <property type="entry name" value="L28"/>
    <property type="match status" value="1"/>
</dbReference>
<dbReference type="PANTHER" id="PTHR13528">
    <property type="entry name" value="39S RIBOSOMAL PROTEIN L28, MITOCHONDRIAL"/>
    <property type="match status" value="1"/>
</dbReference>
<dbReference type="PANTHER" id="PTHR13528:SF2">
    <property type="entry name" value="LARGE RIBOSOMAL SUBUNIT PROTEIN BL28M"/>
    <property type="match status" value="1"/>
</dbReference>
<dbReference type="Pfam" id="PF00830">
    <property type="entry name" value="Ribosomal_L28"/>
    <property type="match status" value="1"/>
</dbReference>
<dbReference type="SUPFAM" id="SSF143800">
    <property type="entry name" value="L28p-like"/>
    <property type="match status" value="1"/>
</dbReference>
<reference key="1">
    <citation type="journal article" date="2006" name="PLoS Genet.">
        <title>Comparative genomics of emerging human ehrlichiosis agents.</title>
        <authorList>
            <person name="Dunning Hotopp J.C."/>
            <person name="Lin M."/>
            <person name="Madupu R."/>
            <person name="Crabtree J."/>
            <person name="Angiuoli S.V."/>
            <person name="Eisen J.A."/>
            <person name="Seshadri R."/>
            <person name="Ren Q."/>
            <person name="Wu M."/>
            <person name="Utterback T.R."/>
            <person name="Smith S."/>
            <person name="Lewis M."/>
            <person name="Khouri H."/>
            <person name="Zhang C."/>
            <person name="Niu H."/>
            <person name="Lin Q."/>
            <person name="Ohashi N."/>
            <person name="Zhi N."/>
            <person name="Nelson W.C."/>
            <person name="Brinkac L.M."/>
            <person name="Dodson R.J."/>
            <person name="Rosovitz M.J."/>
            <person name="Sundaram J.P."/>
            <person name="Daugherty S.C."/>
            <person name="Davidsen T."/>
            <person name="Durkin A.S."/>
            <person name="Gwinn M.L."/>
            <person name="Haft D.H."/>
            <person name="Selengut J.D."/>
            <person name="Sullivan S.A."/>
            <person name="Zafar N."/>
            <person name="Zhou L."/>
            <person name="Benahmed F."/>
            <person name="Forberger H."/>
            <person name="Halpin R."/>
            <person name="Mulligan S."/>
            <person name="Robinson J."/>
            <person name="White O."/>
            <person name="Rikihisa Y."/>
            <person name="Tettelin H."/>
        </authorList>
    </citation>
    <scope>NUCLEOTIDE SEQUENCE [LARGE SCALE GENOMIC DNA]</scope>
    <source>
        <strain>ATCC VR-367 / Miyayama</strain>
    </source>
</reference>
<organism>
    <name type="scientific">Neorickettsia sennetsu (strain ATCC VR-367 / Miyayama)</name>
    <name type="common">Ehrlichia sennetsu</name>
    <dbReference type="NCBI Taxonomy" id="222891"/>
    <lineage>
        <taxon>Bacteria</taxon>
        <taxon>Pseudomonadati</taxon>
        <taxon>Pseudomonadota</taxon>
        <taxon>Alphaproteobacteria</taxon>
        <taxon>Rickettsiales</taxon>
        <taxon>Anaplasmataceae</taxon>
        <taxon>Neorickettsia</taxon>
    </lineage>
</organism>
<sequence>MSNSCDLTGHGWQNGNMVSHSNRKTKKRFMPNLQRVTVFSDVLKQKFRFKVSAKTIRTIDFKGGLDDFLRNTKNSKLSKSALVLKKRIMKKVSGDGTNDRKA</sequence>
<proteinExistence type="inferred from homology"/>
<gene>
    <name evidence="1" type="primary">rpmB</name>
    <name type="ordered locus">NSE_0321</name>
</gene>